<reference key="1">
    <citation type="journal article" date="2003" name="Proc. Natl. Acad. Sci. U.S.A.">
        <title>Complete genome sequence of the marine planctomycete Pirellula sp. strain 1.</title>
        <authorList>
            <person name="Gloeckner F.O."/>
            <person name="Kube M."/>
            <person name="Bauer M."/>
            <person name="Teeling H."/>
            <person name="Lombardot T."/>
            <person name="Ludwig W."/>
            <person name="Gade D."/>
            <person name="Beck A."/>
            <person name="Borzym K."/>
            <person name="Heitmann K."/>
            <person name="Rabus R."/>
            <person name="Schlesner H."/>
            <person name="Amann R."/>
            <person name="Reinhardt R."/>
        </authorList>
    </citation>
    <scope>NUCLEOTIDE SEQUENCE [LARGE SCALE GENOMIC DNA]</scope>
    <source>
        <strain>DSM 10527 / NCIMB 13988 / SH1</strain>
    </source>
</reference>
<keyword id="KW-1185">Reference proteome</keyword>
<keyword id="KW-0687">Ribonucleoprotein</keyword>
<keyword id="KW-0689">Ribosomal protein</keyword>
<keyword id="KW-0694">RNA-binding</keyword>
<keyword id="KW-0699">rRNA-binding</keyword>
<comment type="function">
    <text evidence="1">This protein binds to the 23S rRNA, and is important in its secondary structure. It is located near the subunit interface in the base of the L7/L12 stalk, and near the tRNA binding site of the peptidyltransferase center.</text>
</comment>
<comment type="subunit">
    <text evidence="1">Part of the 50S ribosomal subunit.</text>
</comment>
<comment type="similarity">
    <text evidence="1">Belongs to the universal ribosomal protein uL6 family.</text>
</comment>
<name>RL6_RHOBA</name>
<dbReference type="EMBL" id="BX294146">
    <property type="protein sequence ID" value="CAD75614.1"/>
    <property type="molecule type" value="Genomic_DNA"/>
</dbReference>
<dbReference type="RefSeq" id="NP_868067.1">
    <property type="nucleotide sequence ID" value="NC_005027.1"/>
</dbReference>
<dbReference type="RefSeq" id="WP_011121609.1">
    <property type="nucleotide sequence ID" value="NC_005027.1"/>
</dbReference>
<dbReference type="SMR" id="Q7UN05"/>
<dbReference type="FunCoup" id="Q7UN05">
    <property type="interactions" value="618"/>
</dbReference>
<dbReference type="STRING" id="243090.RB7856"/>
<dbReference type="EnsemblBacteria" id="CAD75614">
    <property type="protein sequence ID" value="CAD75614"/>
    <property type="gene ID" value="RB7856"/>
</dbReference>
<dbReference type="KEGG" id="rba:RB7856"/>
<dbReference type="PATRIC" id="fig|243090.15.peg.3798"/>
<dbReference type="eggNOG" id="COG0097">
    <property type="taxonomic scope" value="Bacteria"/>
</dbReference>
<dbReference type="HOGENOM" id="CLU_065464_1_2_0"/>
<dbReference type="InParanoid" id="Q7UN05"/>
<dbReference type="OrthoDB" id="9805007at2"/>
<dbReference type="Proteomes" id="UP000001025">
    <property type="component" value="Chromosome"/>
</dbReference>
<dbReference type="GO" id="GO:0022625">
    <property type="term" value="C:cytosolic large ribosomal subunit"/>
    <property type="evidence" value="ECO:0000318"/>
    <property type="project" value="GO_Central"/>
</dbReference>
<dbReference type="GO" id="GO:0019843">
    <property type="term" value="F:rRNA binding"/>
    <property type="evidence" value="ECO:0007669"/>
    <property type="project" value="UniProtKB-UniRule"/>
</dbReference>
<dbReference type="GO" id="GO:0003735">
    <property type="term" value="F:structural constituent of ribosome"/>
    <property type="evidence" value="ECO:0000318"/>
    <property type="project" value="GO_Central"/>
</dbReference>
<dbReference type="GO" id="GO:0002181">
    <property type="term" value="P:cytoplasmic translation"/>
    <property type="evidence" value="ECO:0000318"/>
    <property type="project" value="GO_Central"/>
</dbReference>
<dbReference type="FunFam" id="3.90.930.12:FF:000002">
    <property type="entry name" value="50S ribosomal protein L6"/>
    <property type="match status" value="1"/>
</dbReference>
<dbReference type="FunFam" id="3.90.930.12:FF:000006">
    <property type="entry name" value="50S ribosomal protein L6"/>
    <property type="match status" value="1"/>
</dbReference>
<dbReference type="Gene3D" id="3.90.930.12">
    <property type="entry name" value="Ribosomal protein L6, alpha-beta domain"/>
    <property type="match status" value="2"/>
</dbReference>
<dbReference type="HAMAP" id="MF_01365_B">
    <property type="entry name" value="Ribosomal_uL6_B"/>
    <property type="match status" value="1"/>
</dbReference>
<dbReference type="InterPro" id="IPR000702">
    <property type="entry name" value="Ribosomal_uL6-like"/>
</dbReference>
<dbReference type="InterPro" id="IPR036789">
    <property type="entry name" value="Ribosomal_uL6-like_a/b-dom_sf"/>
</dbReference>
<dbReference type="InterPro" id="IPR020040">
    <property type="entry name" value="Ribosomal_uL6_a/b-dom"/>
</dbReference>
<dbReference type="InterPro" id="IPR019906">
    <property type="entry name" value="Ribosomal_uL6_bac-type"/>
</dbReference>
<dbReference type="InterPro" id="IPR002358">
    <property type="entry name" value="Ribosomal_uL6_CS"/>
</dbReference>
<dbReference type="NCBIfam" id="TIGR03654">
    <property type="entry name" value="L6_bact"/>
    <property type="match status" value="1"/>
</dbReference>
<dbReference type="PANTHER" id="PTHR11655">
    <property type="entry name" value="60S/50S RIBOSOMAL PROTEIN L6/L9"/>
    <property type="match status" value="1"/>
</dbReference>
<dbReference type="PANTHER" id="PTHR11655:SF14">
    <property type="entry name" value="LARGE RIBOSOMAL SUBUNIT PROTEIN UL6M"/>
    <property type="match status" value="1"/>
</dbReference>
<dbReference type="Pfam" id="PF00347">
    <property type="entry name" value="Ribosomal_L6"/>
    <property type="match status" value="2"/>
</dbReference>
<dbReference type="PIRSF" id="PIRSF002162">
    <property type="entry name" value="Ribosomal_L6"/>
    <property type="match status" value="1"/>
</dbReference>
<dbReference type="PRINTS" id="PR00059">
    <property type="entry name" value="RIBOSOMALL6"/>
</dbReference>
<dbReference type="SUPFAM" id="SSF56053">
    <property type="entry name" value="Ribosomal protein L6"/>
    <property type="match status" value="2"/>
</dbReference>
<dbReference type="PROSITE" id="PS00525">
    <property type="entry name" value="RIBOSOMAL_L6_1"/>
    <property type="match status" value="1"/>
</dbReference>
<gene>
    <name evidence="1" type="primary">rplF</name>
    <name type="ordered locus">RB7856</name>
</gene>
<protein>
    <recommendedName>
        <fullName evidence="1">Large ribosomal subunit protein uL6</fullName>
    </recommendedName>
    <alternativeName>
        <fullName evidence="2">50S ribosomal protein L6</fullName>
    </alternativeName>
</protein>
<sequence length="181" mass="19734">MSRIGNKPVAIPSGVTVSIADRNIDVEGPKGKLSFKHRPEVKVAVDSDTNQVIVSRDGDDRPSREFHGLTRAIVANMLVGVKDGYEKKLEIVGVGYLASISGDTLQLRVGYANELHRKIPTDLTVTCPDQTHVVIQGCDKQSVGQFAAEIRSLRKPEPYKGKGIRYQGEQVKIKPGKSATK</sequence>
<accession>Q7UN05</accession>
<evidence type="ECO:0000255" key="1">
    <source>
        <dbReference type="HAMAP-Rule" id="MF_01365"/>
    </source>
</evidence>
<evidence type="ECO:0000305" key="2"/>
<organism>
    <name type="scientific">Rhodopirellula baltica (strain DSM 10527 / NCIMB 13988 / SH1)</name>
    <dbReference type="NCBI Taxonomy" id="243090"/>
    <lineage>
        <taxon>Bacteria</taxon>
        <taxon>Pseudomonadati</taxon>
        <taxon>Planctomycetota</taxon>
        <taxon>Planctomycetia</taxon>
        <taxon>Pirellulales</taxon>
        <taxon>Pirellulaceae</taxon>
        <taxon>Rhodopirellula</taxon>
    </lineage>
</organism>
<feature type="chain" id="PRO_0000265286" description="Large ribosomal subunit protein uL6">
    <location>
        <begin position="1"/>
        <end position="181"/>
    </location>
</feature>
<proteinExistence type="inferred from homology"/>